<feature type="chain" id="PRO_0000206168" description="Sex-regulated protein janus-B">
    <location>
        <begin position="1"/>
        <end position="140"/>
    </location>
</feature>
<feature type="active site" description="Proton acceptor" evidence="1">
    <location>
        <position position="69"/>
    </location>
</feature>
<feature type="binding site" evidence="1">
    <location>
        <position position="42"/>
    </location>
    <ligand>
        <name>substrate</name>
    </ligand>
</feature>
<feature type="binding site" evidence="1">
    <location>
        <begin position="110"/>
        <end position="112"/>
    </location>
    <ligand>
        <name>substrate</name>
    </ligand>
</feature>
<feature type="sequence conflict" description="In Ref. 1; AAB33913." evidence="2" ref="1">
    <original>K</original>
    <variation>E</variation>
    <location>
        <position position="105"/>
    </location>
</feature>
<evidence type="ECO:0000250" key="1"/>
<evidence type="ECO:0000305" key="2"/>
<proteinExistence type="inferred from homology"/>
<protein>
    <recommendedName>
        <fullName>Sex-regulated protein janus-B</fullName>
    </recommendedName>
</protein>
<reference key="1">
    <citation type="journal article" date="1995" name="Mol. Gen. Genet.">
        <title>Separate cis-regulatory sequences control expression of serendipity beta and janus A, two immediately adjacent Drosophila genes.</title>
        <authorList>
            <person name="Yanicostas C."/>
            <person name="Ferrer P."/>
            <person name="Vincent A."/>
            <person name="Lepesant J.-A."/>
        </authorList>
    </citation>
    <scope>NUCLEOTIDE SEQUENCE [GENOMIC DNA]</scope>
</reference>
<reference key="2">
    <citation type="journal article" date="2005" name="Genome Res.">
        <title>Comparative genome sequencing of Drosophila pseudoobscura: chromosomal, gene, and cis-element evolution.</title>
        <authorList>
            <person name="Richards S."/>
            <person name="Liu Y."/>
            <person name="Bettencourt B.R."/>
            <person name="Hradecky P."/>
            <person name="Letovsky S."/>
            <person name="Nielsen R."/>
            <person name="Thornton K."/>
            <person name="Hubisz M.J."/>
            <person name="Chen R."/>
            <person name="Meisel R.P."/>
            <person name="Couronne O."/>
            <person name="Hua S."/>
            <person name="Smith M.A."/>
            <person name="Zhang P."/>
            <person name="Liu J."/>
            <person name="Bussemaker H.J."/>
            <person name="van Batenburg M.F."/>
            <person name="Howells S.L."/>
            <person name="Scherer S.E."/>
            <person name="Sodergren E."/>
            <person name="Matthews B.B."/>
            <person name="Crosby M.A."/>
            <person name="Schroeder A.J."/>
            <person name="Ortiz-Barrientos D."/>
            <person name="Rives C.M."/>
            <person name="Metzker M.L."/>
            <person name="Muzny D.M."/>
            <person name="Scott G."/>
            <person name="Steffen D."/>
            <person name="Wheeler D.A."/>
            <person name="Worley K.C."/>
            <person name="Havlak P."/>
            <person name="Durbin K.J."/>
            <person name="Egan A."/>
            <person name="Gill R."/>
            <person name="Hume J."/>
            <person name="Morgan M.B."/>
            <person name="Miner G."/>
            <person name="Hamilton C."/>
            <person name="Huang Y."/>
            <person name="Waldron L."/>
            <person name="Verduzco D."/>
            <person name="Clerc-Blankenburg K.P."/>
            <person name="Dubchak I."/>
            <person name="Noor M.A.F."/>
            <person name="Anderson W."/>
            <person name="White K.P."/>
            <person name="Clark A.G."/>
            <person name="Schaeffer S.W."/>
            <person name="Gelbart W.M."/>
            <person name="Weinstock G.M."/>
            <person name="Gibbs R.A."/>
        </authorList>
    </citation>
    <scope>NUCLEOTIDE SEQUENCE [LARGE SCALE GENOMIC DNA]</scope>
    <source>
        <strain>MV2-25 / Tucson 14011-0121.94</strain>
    </source>
</reference>
<dbReference type="EMBL" id="S77099">
    <property type="protein sequence ID" value="AAB33913.2"/>
    <property type="molecule type" value="Genomic_DNA"/>
</dbReference>
<dbReference type="EMBL" id="CM000070">
    <property type="status" value="NOT_ANNOTATED_CDS"/>
    <property type="molecule type" value="Genomic_DNA"/>
</dbReference>
<dbReference type="PIR" id="S53877">
    <property type="entry name" value="S53877"/>
</dbReference>
<dbReference type="SMR" id="P54365"/>
<dbReference type="FunCoup" id="P54365">
    <property type="interactions" value="3"/>
</dbReference>
<dbReference type="STRING" id="46245.P54365"/>
<dbReference type="eggNOG" id="ENOG502T83H">
    <property type="taxonomic scope" value="Eukaryota"/>
</dbReference>
<dbReference type="InParanoid" id="P54365"/>
<dbReference type="Proteomes" id="UP000001819">
    <property type="component" value="Unplaced"/>
</dbReference>
<dbReference type="GO" id="GO:0005829">
    <property type="term" value="C:cytosol"/>
    <property type="evidence" value="ECO:0007669"/>
    <property type="project" value="TreeGrafter"/>
</dbReference>
<dbReference type="GO" id="GO:0101006">
    <property type="term" value="F:protein histidine phosphatase activity"/>
    <property type="evidence" value="ECO:0007669"/>
    <property type="project" value="TreeGrafter"/>
</dbReference>
<dbReference type="GO" id="GO:0030154">
    <property type="term" value="P:cell differentiation"/>
    <property type="evidence" value="ECO:0007669"/>
    <property type="project" value="UniProtKB-KW"/>
</dbReference>
<dbReference type="GO" id="GO:0007548">
    <property type="term" value="P:sex differentiation"/>
    <property type="evidence" value="ECO:0000250"/>
    <property type="project" value="UniProtKB"/>
</dbReference>
<dbReference type="FunFam" id="3.50.20.20:FF:000002">
    <property type="entry name" value="Sex-regulated protein janus-B"/>
    <property type="match status" value="1"/>
</dbReference>
<dbReference type="Gene3D" id="3.50.20.20">
    <property type="entry name" value="Janus/Ocnus"/>
    <property type="match status" value="1"/>
</dbReference>
<dbReference type="InterPro" id="IPR007702">
    <property type="entry name" value="Janus"/>
</dbReference>
<dbReference type="InterPro" id="IPR038596">
    <property type="entry name" value="Janus_sf"/>
</dbReference>
<dbReference type="PANTHER" id="PTHR12258:SF5">
    <property type="entry name" value="BCDNA.GH02250-RELATED"/>
    <property type="match status" value="1"/>
</dbReference>
<dbReference type="PANTHER" id="PTHR12258">
    <property type="entry name" value="JANUS-A/JANUS-B"/>
    <property type="match status" value="1"/>
</dbReference>
<dbReference type="Pfam" id="PF05005">
    <property type="entry name" value="Ocnus"/>
    <property type="match status" value="1"/>
</dbReference>
<dbReference type="SUPFAM" id="SSF143724">
    <property type="entry name" value="PHP14-like"/>
    <property type="match status" value="1"/>
</dbReference>
<comment type="function">
    <text evidence="1">JanA and janB regulate somatic sex differentiation.</text>
</comment>
<comment type="similarity">
    <text evidence="2">Belongs to the janus family.</text>
</comment>
<gene>
    <name type="primary">janB</name>
    <name type="ORF">GA20697</name>
</gene>
<name>JANB_DROPS</name>
<organism>
    <name type="scientific">Drosophila pseudoobscura pseudoobscura</name>
    <name type="common">Fruit fly</name>
    <dbReference type="NCBI Taxonomy" id="46245"/>
    <lineage>
        <taxon>Eukaryota</taxon>
        <taxon>Metazoa</taxon>
        <taxon>Ecdysozoa</taxon>
        <taxon>Arthropoda</taxon>
        <taxon>Hexapoda</taxon>
        <taxon>Insecta</taxon>
        <taxon>Pterygota</taxon>
        <taxon>Neoptera</taxon>
        <taxon>Endopterygota</taxon>
        <taxon>Diptera</taxon>
        <taxon>Brachycera</taxon>
        <taxon>Muscomorpha</taxon>
        <taxon>Ephydroidea</taxon>
        <taxon>Drosophilidae</taxon>
        <taxon>Drosophila</taxon>
        <taxon>Sophophora</taxon>
    </lineage>
</organism>
<accession>P54365</accession>
<accession>Q29C77</accession>
<sequence length="140" mass="15812">MKILNCFSLIGQCAKPILRTYTSPAADLLKLPRVDIKEGKLRYLLLSVYIHGETKHARTVVRGWNTDSHDDIYYKNVRAMEKLGLCTKCLGGGKMDNDESARKIKIHGSCKTFGAANHHKTKEILLSSSKYKNFNITVKK</sequence>
<keyword id="KW-0221">Differentiation</keyword>
<keyword id="KW-1185">Reference proteome</keyword>
<keyword id="KW-0726">Sexual differentiation</keyword>